<comment type="function">
    <text evidence="1">An essential GTPase which binds GTP, GDP and possibly (p)ppGpp with moderate affinity, with high nucleotide exchange rates and a fairly low GTP hydrolysis rate. Plays a role in control of the cell cycle, stress response, ribosome biogenesis and in those bacteria that undergo differentiation, in morphogenesis control.</text>
</comment>
<comment type="cofactor">
    <cofactor evidence="1">
        <name>Mg(2+)</name>
        <dbReference type="ChEBI" id="CHEBI:18420"/>
    </cofactor>
</comment>
<comment type="subunit">
    <text evidence="1">Monomer.</text>
</comment>
<comment type="subcellular location">
    <subcellularLocation>
        <location evidence="1">Cytoplasm</location>
    </subcellularLocation>
</comment>
<comment type="similarity">
    <text evidence="1">Belongs to the TRAFAC class OBG-HflX-like GTPase superfamily. OBG GTPase family.</text>
</comment>
<protein>
    <recommendedName>
        <fullName evidence="1">GTPase Obg</fullName>
        <ecNumber evidence="1">3.6.5.-</ecNumber>
    </recommendedName>
    <alternativeName>
        <fullName evidence="1">GTP-binding protein Obg</fullName>
    </alternativeName>
</protein>
<reference key="1">
    <citation type="journal article" date="2005" name="Science">
        <title>Genome sequence of the PCE-dechlorinating bacterium Dehalococcoides ethenogenes.</title>
        <authorList>
            <person name="Seshadri R."/>
            <person name="Adrian L."/>
            <person name="Fouts D.E."/>
            <person name="Eisen J.A."/>
            <person name="Phillippy A.M."/>
            <person name="Methe B.A."/>
            <person name="Ward N.L."/>
            <person name="Nelson W.C."/>
            <person name="DeBoy R.T."/>
            <person name="Khouri H.M."/>
            <person name="Kolonay J.F."/>
            <person name="Dodson R.J."/>
            <person name="Daugherty S.C."/>
            <person name="Brinkac L.M."/>
            <person name="Sullivan S.A."/>
            <person name="Madupu R."/>
            <person name="Nelson K.E."/>
            <person name="Kang K.H."/>
            <person name="Impraim M."/>
            <person name="Tran K."/>
            <person name="Robinson J.M."/>
            <person name="Forberger H.A."/>
            <person name="Fraser C.M."/>
            <person name="Zinder S.H."/>
            <person name="Heidelberg J.F."/>
        </authorList>
    </citation>
    <scope>NUCLEOTIDE SEQUENCE [LARGE SCALE GENOMIC DNA]</scope>
    <source>
        <strain>ATCC BAA-2266 / KCTC 15142 / 195</strain>
    </source>
</reference>
<organism>
    <name type="scientific">Dehalococcoides mccartyi (strain ATCC BAA-2266 / KCTC 15142 / 195)</name>
    <name type="common">Dehalococcoides ethenogenes (strain 195)</name>
    <dbReference type="NCBI Taxonomy" id="243164"/>
    <lineage>
        <taxon>Bacteria</taxon>
        <taxon>Bacillati</taxon>
        <taxon>Chloroflexota</taxon>
        <taxon>Dehalococcoidia</taxon>
        <taxon>Dehalococcoidales</taxon>
        <taxon>Dehalococcoidaceae</taxon>
        <taxon>Dehalococcoides</taxon>
    </lineage>
</organism>
<sequence>MFDRVEIRIKSGDGGSGKVSFRREKFVPYGGPDGGDGGDGGNVYLEADSGLYSLLNFKHKRVHKAANGENGMGSRCTGHNGADLVIKVPVGTVATIVEENGQKRVLADLAADGDRTLVARGGQGGLGNTHFVSSTNQAPMLAQKGQPGGEYELILELKLIADVAIIGYPNVGKSSLLSLLTAAKPRVANYPFTTLSPVMGVVERTEGTFVMAEVPGLIEDAHLGRGLGHDFLRHISRTRMVIHLLDGTSDNPIDDMIKVNSELYLYDASLSERPQVVAVNKIDDELVQLRREELTETFKEAGLEVFFISALTGEGVEVLLDKVAEKLAILKAADAPETETDQEIKVFRPAPKGKMGFHITRLEDGWQVEAPEIERIIEHSDIEDLEVRRQIMVLLKHRNVQQALIKAGAVIGQKIITGRLEWYL</sequence>
<accession>Q3ZAJ2</accession>
<evidence type="ECO:0000255" key="1">
    <source>
        <dbReference type="HAMAP-Rule" id="MF_01454"/>
    </source>
</evidence>
<evidence type="ECO:0000255" key="2">
    <source>
        <dbReference type="PROSITE-ProRule" id="PRU01229"/>
    </source>
</evidence>
<evidence type="ECO:0000255" key="3">
    <source>
        <dbReference type="PROSITE-ProRule" id="PRU01231"/>
    </source>
</evidence>
<dbReference type="EC" id="3.6.5.-" evidence="1"/>
<dbReference type="EMBL" id="CP000027">
    <property type="protein sequence ID" value="AAW39191.1"/>
    <property type="molecule type" value="Genomic_DNA"/>
</dbReference>
<dbReference type="RefSeq" id="WP_010935812.1">
    <property type="nucleotide sequence ID" value="NC_002936.3"/>
</dbReference>
<dbReference type="SMR" id="Q3ZAJ2"/>
<dbReference type="FunCoup" id="Q3ZAJ2">
    <property type="interactions" value="301"/>
</dbReference>
<dbReference type="STRING" id="243164.DET0002"/>
<dbReference type="GeneID" id="3229149"/>
<dbReference type="KEGG" id="det:DET0002"/>
<dbReference type="PATRIC" id="fig|243164.10.peg.2"/>
<dbReference type="eggNOG" id="COG0536">
    <property type="taxonomic scope" value="Bacteria"/>
</dbReference>
<dbReference type="HOGENOM" id="CLU_011747_2_1_0"/>
<dbReference type="InParanoid" id="Q3ZAJ2"/>
<dbReference type="Proteomes" id="UP000008289">
    <property type="component" value="Chromosome"/>
</dbReference>
<dbReference type="GO" id="GO:0005737">
    <property type="term" value="C:cytoplasm"/>
    <property type="evidence" value="ECO:0007669"/>
    <property type="project" value="UniProtKB-SubCell"/>
</dbReference>
<dbReference type="GO" id="GO:0005525">
    <property type="term" value="F:GTP binding"/>
    <property type="evidence" value="ECO:0007669"/>
    <property type="project" value="UniProtKB-UniRule"/>
</dbReference>
<dbReference type="GO" id="GO:0003924">
    <property type="term" value="F:GTPase activity"/>
    <property type="evidence" value="ECO:0007669"/>
    <property type="project" value="UniProtKB-UniRule"/>
</dbReference>
<dbReference type="GO" id="GO:0000287">
    <property type="term" value="F:magnesium ion binding"/>
    <property type="evidence" value="ECO:0007669"/>
    <property type="project" value="InterPro"/>
</dbReference>
<dbReference type="GO" id="GO:0042254">
    <property type="term" value="P:ribosome biogenesis"/>
    <property type="evidence" value="ECO:0007669"/>
    <property type="project" value="UniProtKB-UniRule"/>
</dbReference>
<dbReference type="CDD" id="cd01898">
    <property type="entry name" value="Obg"/>
    <property type="match status" value="1"/>
</dbReference>
<dbReference type="FunFam" id="2.70.210.12:FF:000001">
    <property type="entry name" value="GTPase Obg"/>
    <property type="match status" value="1"/>
</dbReference>
<dbReference type="Gene3D" id="3.30.300.350">
    <property type="entry name" value="GTP-binding protein OBG, C-terminal domain"/>
    <property type="match status" value="1"/>
</dbReference>
<dbReference type="Gene3D" id="2.70.210.12">
    <property type="entry name" value="GTP1/OBG domain"/>
    <property type="match status" value="1"/>
</dbReference>
<dbReference type="Gene3D" id="3.40.50.300">
    <property type="entry name" value="P-loop containing nucleotide triphosphate hydrolases"/>
    <property type="match status" value="1"/>
</dbReference>
<dbReference type="HAMAP" id="MF_01454">
    <property type="entry name" value="GTPase_Obg"/>
    <property type="match status" value="1"/>
</dbReference>
<dbReference type="InterPro" id="IPR031167">
    <property type="entry name" value="G_OBG"/>
</dbReference>
<dbReference type="InterPro" id="IPR006073">
    <property type="entry name" value="GTP-bd"/>
</dbReference>
<dbReference type="InterPro" id="IPR014100">
    <property type="entry name" value="GTP-bd_Obg/CgtA"/>
</dbReference>
<dbReference type="InterPro" id="IPR036346">
    <property type="entry name" value="GTP-bd_prot_GTP1/OBG_C_sf"/>
</dbReference>
<dbReference type="InterPro" id="IPR006169">
    <property type="entry name" value="GTP1_OBG_dom"/>
</dbReference>
<dbReference type="InterPro" id="IPR036726">
    <property type="entry name" value="GTP1_OBG_dom_sf"/>
</dbReference>
<dbReference type="InterPro" id="IPR045086">
    <property type="entry name" value="OBG_GTPase"/>
</dbReference>
<dbReference type="InterPro" id="IPR015349">
    <property type="entry name" value="OCT_dom"/>
</dbReference>
<dbReference type="InterPro" id="IPR027417">
    <property type="entry name" value="P-loop_NTPase"/>
</dbReference>
<dbReference type="InterPro" id="IPR005225">
    <property type="entry name" value="Small_GTP-bd"/>
</dbReference>
<dbReference type="NCBIfam" id="TIGR02729">
    <property type="entry name" value="Obg_CgtA"/>
    <property type="match status" value="1"/>
</dbReference>
<dbReference type="NCBIfam" id="TIGR03595">
    <property type="entry name" value="Obg_CgtA_exten"/>
    <property type="match status" value="1"/>
</dbReference>
<dbReference type="NCBIfam" id="NF008954">
    <property type="entry name" value="PRK12296.1"/>
    <property type="match status" value="1"/>
</dbReference>
<dbReference type="NCBIfam" id="NF008955">
    <property type="entry name" value="PRK12297.1"/>
    <property type="match status" value="1"/>
</dbReference>
<dbReference type="NCBIfam" id="NF008956">
    <property type="entry name" value="PRK12299.1"/>
    <property type="match status" value="1"/>
</dbReference>
<dbReference type="NCBIfam" id="TIGR00231">
    <property type="entry name" value="small_GTP"/>
    <property type="match status" value="1"/>
</dbReference>
<dbReference type="PANTHER" id="PTHR11702">
    <property type="entry name" value="DEVELOPMENTALLY REGULATED GTP-BINDING PROTEIN-RELATED"/>
    <property type="match status" value="1"/>
</dbReference>
<dbReference type="PANTHER" id="PTHR11702:SF31">
    <property type="entry name" value="MITOCHONDRIAL RIBOSOME-ASSOCIATED GTPASE 2"/>
    <property type="match status" value="1"/>
</dbReference>
<dbReference type="Pfam" id="PF09269">
    <property type="entry name" value="DUF1967"/>
    <property type="match status" value="1"/>
</dbReference>
<dbReference type="Pfam" id="PF01018">
    <property type="entry name" value="GTP1_OBG"/>
    <property type="match status" value="1"/>
</dbReference>
<dbReference type="Pfam" id="PF01926">
    <property type="entry name" value="MMR_HSR1"/>
    <property type="match status" value="1"/>
</dbReference>
<dbReference type="PRINTS" id="PR00326">
    <property type="entry name" value="GTP1OBG"/>
</dbReference>
<dbReference type="SUPFAM" id="SSF102741">
    <property type="entry name" value="Obg GTP-binding protein C-terminal domain"/>
    <property type="match status" value="1"/>
</dbReference>
<dbReference type="SUPFAM" id="SSF82051">
    <property type="entry name" value="Obg GTP-binding protein N-terminal domain"/>
    <property type="match status" value="1"/>
</dbReference>
<dbReference type="SUPFAM" id="SSF52540">
    <property type="entry name" value="P-loop containing nucleoside triphosphate hydrolases"/>
    <property type="match status" value="1"/>
</dbReference>
<dbReference type="PROSITE" id="PS51710">
    <property type="entry name" value="G_OBG"/>
    <property type="match status" value="1"/>
</dbReference>
<dbReference type="PROSITE" id="PS51883">
    <property type="entry name" value="OBG"/>
    <property type="match status" value="1"/>
</dbReference>
<dbReference type="PROSITE" id="PS51881">
    <property type="entry name" value="OCT"/>
    <property type="match status" value="1"/>
</dbReference>
<name>OBG_DEHM1</name>
<keyword id="KW-0963">Cytoplasm</keyword>
<keyword id="KW-0342">GTP-binding</keyword>
<keyword id="KW-0378">Hydrolase</keyword>
<keyword id="KW-0460">Magnesium</keyword>
<keyword id="KW-0479">Metal-binding</keyword>
<keyword id="KW-0547">Nucleotide-binding</keyword>
<proteinExistence type="inferred from homology"/>
<gene>
    <name evidence="1" type="primary">obg</name>
    <name type="ordered locus">DET0002</name>
</gene>
<feature type="chain" id="PRO_0000385875" description="GTPase Obg">
    <location>
        <begin position="1"/>
        <end position="424"/>
    </location>
</feature>
<feature type="domain" description="Obg" evidence="3">
    <location>
        <begin position="1"/>
        <end position="160"/>
    </location>
</feature>
<feature type="domain" description="OBG-type G" evidence="1">
    <location>
        <begin position="161"/>
        <end position="328"/>
    </location>
</feature>
<feature type="domain" description="OCT" evidence="2">
    <location>
        <begin position="349"/>
        <end position="424"/>
    </location>
</feature>
<feature type="binding site" evidence="1">
    <location>
        <begin position="167"/>
        <end position="174"/>
    </location>
    <ligand>
        <name>GTP</name>
        <dbReference type="ChEBI" id="CHEBI:37565"/>
    </ligand>
</feature>
<feature type="binding site" evidence="1">
    <location>
        <position position="174"/>
    </location>
    <ligand>
        <name>Mg(2+)</name>
        <dbReference type="ChEBI" id="CHEBI:18420"/>
    </ligand>
</feature>
<feature type="binding site" evidence="1">
    <location>
        <begin position="192"/>
        <end position="196"/>
    </location>
    <ligand>
        <name>GTP</name>
        <dbReference type="ChEBI" id="CHEBI:37565"/>
    </ligand>
</feature>
<feature type="binding site" evidence="1">
    <location>
        <position position="194"/>
    </location>
    <ligand>
        <name>Mg(2+)</name>
        <dbReference type="ChEBI" id="CHEBI:18420"/>
    </ligand>
</feature>
<feature type="binding site" evidence="1">
    <location>
        <begin position="213"/>
        <end position="216"/>
    </location>
    <ligand>
        <name>GTP</name>
        <dbReference type="ChEBI" id="CHEBI:37565"/>
    </ligand>
</feature>
<feature type="binding site" evidence="1">
    <location>
        <begin position="280"/>
        <end position="283"/>
    </location>
    <ligand>
        <name>GTP</name>
        <dbReference type="ChEBI" id="CHEBI:37565"/>
    </ligand>
</feature>
<feature type="binding site" evidence="1">
    <location>
        <begin position="309"/>
        <end position="311"/>
    </location>
    <ligand>
        <name>GTP</name>
        <dbReference type="ChEBI" id="CHEBI:37565"/>
    </ligand>
</feature>